<name>TRI10_PIG</name>
<reference key="1">
    <citation type="journal article" date="2001" name="Immunogenetics">
        <title>Sequence of the pig major histocompatibility region containing the classical class I genes.</title>
        <authorList>
            <person name="Renard C."/>
            <person name="Vaiman M."/>
            <person name="Chiannilkulchai N."/>
            <person name="Cattolico L."/>
            <person name="Robert C."/>
            <person name="Chardon P."/>
        </authorList>
    </citation>
    <scope>NUCLEOTIDE SEQUENCE [GENOMIC DNA]</scope>
    <source>
        <strain>Large white</strain>
    </source>
</reference>
<accession>O19085</accession>
<sequence length="482" mass="55462">MASAASVSSLADEVNCPICQGTLREPVTIDCGHNFCCVCLTRYLEIPCLDPGELPTCPLCKEPFRPGSFRPNWQLASVVENIERLKLGSQLGSEEEEDVCLEHREKVYYFCEDDEMQLCVVCREAWEHRHHTVRFLEDAAGPYREQIQKCLECLRKEGEEIQRIQLRENQRIQVLLTQVATKKQKVISEFAHLSQFLEEQQSVLLAQLERLDGDILKHRDEFDVLVAGEICRFNTLIEELEEKNQRPARDLLTDIRSTLIRCETRRCRKPEAVSPELGQRIRDFPQQALPLRREMKTFLEKLCFELDYEPAHISLDPQTSHPKLLLSEDNQQARFSYKWQNSPDNPQRFDRATCVLAHSGFTEGRHTWVVSVDLAHGGSCTVGVVSQDIRRKGELRMRPEEGVWAVRLAWGFVSALGSFPTRLALEEHPRQVRVSIDYEVGWVTFVNAVTQEPIYTFTASFTQKVFPFFGLWGRGSKFSLSS</sequence>
<keyword id="KW-0963">Cytoplasm</keyword>
<keyword id="KW-0479">Metal-binding</keyword>
<keyword id="KW-1185">Reference proteome</keyword>
<keyword id="KW-0862">Zinc</keyword>
<keyword id="KW-0863">Zinc-finger</keyword>
<proteinExistence type="inferred from homology"/>
<gene>
    <name type="primary">TRIM10</name>
    <name type="synonym">RFB30</name>
    <name type="synonym">RNF9</name>
</gene>
<dbReference type="EMBL" id="AJ251829">
    <property type="protein sequence ID" value="CAB63932.1"/>
    <property type="molecule type" value="Genomic_DNA"/>
</dbReference>
<dbReference type="RefSeq" id="NP_001116679.1">
    <property type="nucleotide sequence ID" value="NM_001123207.1"/>
</dbReference>
<dbReference type="SMR" id="O19085"/>
<dbReference type="FunCoup" id="O19085">
    <property type="interactions" value="41"/>
</dbReference>
<dbReference type="STRING" id="9823.ENSSSCP00000035699"/>
<dbReference type="PaxDb" id="9823-ENSSSCP00000001312"/>
<dbReference type="Ensembl" id="ENSSSCT00025038056.1">
    <property type="protein sequence ID" value="ENSSSCP00025016029.1"/>
    <property type="gene ID" value="ENSSSCG00025028050.1"/>
</dbReference>
<dbReference type="Ensembl" id="ENSSSCT00035080976.1">
    <property type="protein sequence ID" value="ENSSSCP00035033435.1"/>
    <property type="gene ID" value="ENSSSCG00035060362.1"/>
</dbReference>
<dbReference type="Ensembl" id="ENSSSCT00045038194.1">
    <property type="protein sequence ID" value="ENSSSCP00045026531.1"/>
    <property type="gene ID" value="ENSSSCG00045022313.1"/>
</dbReference>
<dbReference type="Ensembl" id="ENSSSCT00050106083.1">
    <property type="protein sequence ID" value="ENSSSCP00050046805.1"/>
    <property type="gene ID" value="ENSSSCG00050077097.1"/>
</dbReference>
<dbReference type="Ensembl" id="ENSSSCT00060108926.1">
    <property type="protein sequence ID" value="ENSSSCP00060048665.1"/>
    <property type="gene ID" value="ENSSSCG00060078750.1"/>
</dbReference>
<dbReference type="Ensembl" id="ENSSSCT00065110146.1">
    <property type="protein sequence ID" value="ENSSSCP00065049596.1"/>
    <property type="gene ID" value="ENSSSCG00065079230.1"/>
</dbReference>
<dbReference type="Ensembl" id="ENSSSCT00070049482.1">
    <property type="protein sequence ID" value="ENSSSCP00070041790.1"/>
    <property type="gene ID" value="ENSSSCG00070024775.1"/>
</dbReference>
<dbReference type="Ensembl" id="ENSSSCT00085022775">
    <property type="protein sequence ID" value="ENSSSCP00085015689"/>
    <property type="gene ID" value="ENSSSCG00085012134"/>
</dbReference>
<dbReference type="GeneID" id="100144459"/>
<dbReference type="KEGG" id="ssc:100144459"/>
<dbReference type="CTD" id="10107"/>
<dbReference type="eggNOG" id="KOG2177">
    <property type="taxonomic scope" value="Eukaryota"/>
</dbReference>
<dbReference type="InParanoid" id="O19085"/>
<dbReference type="OrthoDB" id="9410880at2759"/>
<dbReference type="Proteomes" id="UP000008227">
    <property type="component" value="Unplaced"/>
</dbReference>
<dbReference type="Proteomes" id="UP000314985">
    <property type="component" value="Chromosome 7"/>
</dbReference>
<dbReference type="Proteomes" id="UP000694570">
    <property type="component" value="Unplaced"/>
</dbReference>
<dbReference type="Proteomes" id="UP000694571">
    <property type="component" value="Unplaced"/>
</dbReference>
<dbReference type="Proteomes" id="UP000694720">
    <property type="component" value="Unplaced"/>
</dbReference>
<dbReference type="Proteomes" id="UP000694722">
    <property type="component" value="Unplaced"/>
</dbReference>
<dbReference type="Proteomes" id="UP000694723">
    <property type="component" value="Unplaced"/>
</dbReference>
<dbReference type="Proteomes" id="UP000694724">
    <property type="component" value="Unplaced"/>
</dbReference>
<dbReference type="Proteomes" id="UP000694725">
    <property type="component" value="Unplaced"/>
</dbReference>
<dbReference type="Proteomes" id="UP000694726">
    <property type="component" value="Unplaced"/>
</dbReference>
<dbReference type="Proteomes" id="UP000694727">
    <property type="component" value="Unplaced"/>
</dbReference>
<dbReference type="Proteomes" id="UP000694728">
    <property type="component" value="Unplaced"/>
</dbReference>
<dbReference type="GO" id="GO:0005737">
    <property type="term" value="C:cytoplasm"/>
    <property type="evidence" value="ECO:0000318"/>
    <property type="project" value="GO_Central"/>
</dbReference>
<dbReference type="GO" id="GO:0061630">
    <property type="term" value="F:ubiquitin protein ligase activity"/>
    <property type="evidence" value="ECO:0000318"/>
    <property type="project" value="GO_Central"/>
</dbReference>
<dbReference type="GO" id="GO:0008270">
    <property type="term" value="F:zinc ion binding"/>
    <property type="evidence" value="ECO:0007669"/>
    <property type="project" value="UniProtKB-KW"/>
</dbReference>
<dbReference type="GO" id="GO:0045087">
    <property type="term" value="P:innate immune response"/>
    <property type="evidence" value="ECO:0000318"/>
    <property type="project" value="GO_Central"/>
</dbReference>
<dbReference type="CDD" id="cd15827">
    <property type="entry name" value="SPRY_PRY_TRIM10"/>
    <property type="match status" value="1"/>
</dbReference>
<dbReference type="FunFam" id="2.60.120.920:FF:000044">
    <property type="entry name" value="Tripartite motif-containing protein 10"/>
    <property type="match status" value="1"/>
</dbReference>
<dbReference type="Gene3D" id="2.60.120.920">
    <property type="match status" value="1"/>
</dbReference>
<dbReference type="Gene3D" id="3.30.160.60">
    <property type="entry name" value="Classic Zinc Finger"/>
    <property type="match status" value="1"/>
</dbReference>
<dbReference type="Gene3D" id="3.30.40.10">
    <property type="entry name" value="Zinc/RING finger domain, C3HC4 (zinc finger)"/>
    <property type="match status" value="1"/>
</dbReference>
<dbReference type="InterPro" id="IPR001870">
    <property type="entry name" value="B30.2/SPRY"/>
</dbReference>
<dbReference type="InterPro" id="IPR043136">
    <property type="entry name" value="B30.2/SPRY_sf"/>
</dbReference>
<dbReference type="InterPro" id="IPR003879">
    <property type="entry name" value="Butyrophylin_SPRY"/>
</dbReference>
<dbReference type="InterPro" id="IPR013320">
    <property type="entry name" value="ConA-like_dom_sf"/>
</dbReference>
<dbReference type="InterPro" id="IPR006574">
    <property type="entry name" value="PRY"/>
</dbReference>
<dbReference type="InterPro" id="IPR003877">
    <property type="entry name" value="SPRY_dom"/>
</dbReference>
<dbReference type="InterPro" id="IPR050143">
    <property type="entry name" value="TRIM/RBCC"/>
</dbReference>
<dbReference type="InterPro" id="IPR000315">
    <property type="entry name" value="Znf_B-box"/>
</dbReference>
<dbReference type="InterPro" id="IPR018957">
    <property type="entry name" value="Znf_C3HC4_RING-type"/>
</dbReference>
<dbReference type="InterPro" id="IPR001841">
    <property type="entry name" value="Znf_RING"/>
</dbReference>
<dbReference type="InterPro" id="IPR013083">
    <property type="entry name" value="Znf_RING/FYVE/PHD"/>
</dbReference>
<dbReference type="InterPro" id="IPR017907">
    <property type="entry name" value="Znf_RING_CS"/>
</dbReference>
<dbReference type="PANTHER" id="PTHR24103">
    <property type="entry name" value="E3 UBIQUITIN-PROTEIN LIGASE TRIM"/>
    <property type="match status" value="1"/>
</dbReference>
<dbReference type="Pfam" id="PF13765">
    <property type="entry name" value="PRY"/>
    <property type="match status" value="1"/>
</dbReference>
<dbReference type="Pfam" id="PF00622">
    <property type="entry name" value="SPRY"/>
    <property type="match status" value="1"/>
</dbReference>
<dbReference type="Pfam" id="PF00643">
    <property type="entry name" value="zf-B_box"/>
    <property type="match status" value="1"/>
</dbReference>
<dbReference type="Pfam" id="PF00097">
    <property type="entry name" value="zf-C3HC4"/>
    <property type="match status" value="1"/>
</dbReference>
<dbReference type="PRINTS" id="PR01407">
    <property type="entry name" value="BUTYPHLNCDUF"/>
</dbReference>
<dbReference type="SMART" id="SM00336">
    <property type="entry name" value="BBOX"/>
    <property type="match status" value="1"/>
</dbReference>
<dbReference type="SMART" id="SM00589">
    <property type="entry name" value="PRY"/>
    <property type="match status" value="1"/>
</dbReference>
<dbReference type="SMART" id="SM00184">
    <property type="entry name" value="RING"/>
    <property type="match status" value="1"/>
</dbReference>
<dbReference type="SMART" id="SM00449">
    <property type="entry name" value="SPRY"/>
    <property type="match status" value="1"/>
</dbReference>
<dbReference type="SUPFAM" id="SSF57845">
    <property type="entry name" value="B-box zinc-binding domain"/>
    <property type="match status" value="1"/>
</dbReference>
<dbReference type="SUPFAM" id="SSF49899">
    <property type="entry name" value="Concanavalin A-like lectins/glucanases"/>
    <property type="match status" value="1"/>
</dbReference>
<dbReference type="SUPFAM" id="SSF57850">
    <property type="entry name" value="RING/U-box"/>
    <property type="match status" value="1"/>
</dbReference>
<dbReference type="PROSITE" id="PS50188">
    <property type="entry name" value="B302_SPRY"/>
    <property type="match status" value="1"/>
</dbReference>
<dbReference type="PROSITE" id="PS50119">
    <property type="entry name" value="ZF_BBOX"/>
    <property type="match status" value="1"/>
</dbReference>
<dbReference type="PROSITE" id="PS00518">
    <property type="entry name" value="ZF_RING_1"/>
    <property type="match status" value="1"/>
</dbReference>
<dbReference type="PROSITE" id="PS50089">
    <property type="entry name" value="ZF_RING_2"/>
    <property type="match status" value="1"/>
</dbReference>
<feature type="chain" id="PRO_0000056214" description="Tripartite motif-containing protein 10">
    <location>
        <begin position="1"/>
        <end position="482"/>
    </location>
</feature>
<feature type="domain" description="B30.2/SPRY" evidence="5">
    <location>
        <begin position="293"/>
        <end position="482"/>
    </location>
</feature>
<feature type="zinc finger region" description="RING-type" evidence="4">
    <location>
        <begin position="16"/>
        <end position="61"/>
    </location>
</feature>
<feature type="zinc finger region" description="B box-type" evidence="3">
    <location>
        <begin position="95"/>
        <end position="136"/>
    </location>
</feature>
<feature type="binding site" evidence="3">
    <location>
        <position position="100"/>
    </location>
    <ligand>
        <name>Zn(2+)</name>
        <dbReference type="ChEBI" id="CHEBI:29105"/>
    </ligand>
</feature>
<feature type="binding site" evidence="3">
    <location>
        <position position="103"/>
    </location>
    <ligand>
        <name>Zn(2+)</name>
        <dbReference type="ChEBI" id="CHEBI:29105"/>
    </ligand>
</feature>
<feature type="binding site" evidence="3">
    <location>
        <position position="122"/>
    </location>
    <ligand>
        <name>Zn(2+)</name>
        <dbReference type="ChEBI" id="CHEBI:29105"/>
    </ligand>
</feature>
<feature type="binding site" evidence="3">
    <location>
        <position position="128"/>
    </location>
    <ligand>
        <name>Zn(2+)</name>
        <dbReference type="ChEBI" id="CHEBI:29105"/>
    </ligand>
</feature>
<evidence type="ECO:0000250" key="1">
    <source>
        <dbReference type="UniProtKB" id="Q9UDY6"/>
    </source>
</evidence>
<evidence type="ECO:0000250" key="2">
    <source>
        <dbReference type="UniProtKB" id="Q9WUH5"/>
    </source>
</evidence>
<evidence type="ECO:0000255" key="3">
    <source>
        <dbReference type="PROSITE-ProRule" id="PRU00024"/>
    </source>
</evidence>
<evidence type="ECO:0000255" key="4">
    <source>
        <dbReference type="PROSITE-ProRule" id="PRU00175"/>
    </source>
</evidence>
<evidence type="ECO:0000255" key="5">
    <source>
        <dbReference type="PROSITE-ProRule" id="PRU00548"/>
    </source>
</evidence>
<evidence type="ECO:0000305" key="6"/>
<protein>
    <recommendedName>
        <fullName>Tripartite motif-containing protein 10</fullName>
    </recommendedName>
    <alternativeName>
        <fullName>B30-RING finger protein</fullName>
    </alternativeName>
    <alternativeName>
        <fullName>RING finger protein 9</fullName>
    </alternativeName>
</protein>
<comment type="function">
    <text evidence="1 2">E3 ligase that plays an essential role in the differentiation and survival of terminal erythroid cells. May directly bind to PTEN and promote its ubiquitination, resulting in its proteasomal degradation and activation of hypertrophic signaling (By similarity). In addition, plays a role in immune response regulation by repressing the phosphorylation of STAT1 and STAT2 in the interferon/JAK/STAT signaling pathway independent of its E3 ligase activity. Mechanistically, interacts with the intracellular domain of IFNAR1 and thereby inhibits the association of TYK2 and IFNAR1 (By similarity).</text>
</comment>
<comment type="subunit">
    <text evidence="1">Interacts with IFNAR1; this interaction prevents association of IFNAR1 with TYK2.</text>
</comment>
<comment type="subcellular location">
    <subcellularLocation>
        <location evidence="1">Cytoplasm</location>
    </subcellularLocation>
</comment>
<comment type="similarity">
    <text evidence="6">Belongs to the TRIM/RBCC family.</text>
</comment>
<organism>
    <name type="scientific">Sus scrofa</name>
    <name type="common">Pig</name>
    <dbReference type="NCBI Taxonomy" id="9823"/>
    <lineage>
        <taxon>Eukaryota</taxon>
        <taxon>Metazoa</taxon>
        <taxon>Chordata</taxon>
        <taxon>Craniata</taxon>
        <taxon>Vertebrata</taxon>
        <taxon>Euteleostomi</taxon>
        <taxon>Mammalia</taxon>
        <taxon>Eutheria</taxon>
        <taxon>Laurasiatheria</taxon>
        <taxon>Artiodactyla</taxon>
        <taxon>Suina</taxon>
        <taxon>Suidae</taxon>
        <taxon>Sus</taxon>
    </lineage>
</organism>